<organism>
    <name type="scientific">Synechococcus sp. (strain JA-2-3B'a(2-13))</name>
    <name type="common">Cyanobacteria bacterium Yellowstone B-Prime</name>
    <dbReference type="NCBI Taxonomy" id="321332"/>
    <lineage>
        <taxon>Bacteria</taxon>
        <taxon>Bacillati</taxon>
        <taxon>Cyanobacteriota</taxon>
        <taxon>Cyanophyceae</taxon>
        <taxon>Synechococcales</taxon>
        <taxon>Synechococcaceae</taxon>
        <taxon>Synechococcus</taxon>
    </lineage>
</organism>
<gene>
    <name evidence="1" type="primary">rimM</name>
    <name type="ordered locus">CYB_0323</name>
</gene>
<dbReference type="EMBL" id="CP000240">
    <property type="protein sequence ID" value="ABD01321.1"/>
    <property type="molecule type" value="Genomic_DNA"/>
</dbReference>
<dbReference type="SMR" id="Q2JPG6"/>
<dbReference type="STRING" id="321332.CYB_0323"/>
<dbReference type="KEGG" id="cyb:CYB_0323"/>
<dbReference type="eggNOG" id="COG0806">
    <property type="taxonomic scope" value="Bacteria"/>
</dbReference>
<dbReference type="HOGENOM" id="CLU_077636_3_0_3"/>
<dbReference type="OrthoDB" id="9810331at2"/>
<dbReference type="Proteomes" id="UP000001938">
    <property type="component" value="Chromosome"/>
</dbReference>
<dbReference type="GO" id="GO:0005737">
    <property type="term" value="C:cytoplasm"/>
    <property type="evidence" value="ECO:0007669"/>
    <property type="project" value="UniProtKB-SubCell"/>
</dbReference>
<dbReference type="GO" id="GO:0005840">
    <property type="term" value="C:ribosome"/>
    <property type="evidence" value="ECO:0007669"/>
    <property type="project" value="InterPro"/>
</dbReference>
<dbReference type="GO" id="GO:0043022">
    <property type="term" value="F:ribosome binding"/>
    <property type="evidence" value="ECO:0007669"/>
    <property type="project" value="InterPro"/>
</dbReference>
<dbReference type="GO" id="GO:0042274">
    <property type="term" value="P:ribosomal small subunit biogenesis"/>
    <property type="evidence" value="ECO:0007669"/>
    <property type="project" value="UniProtKB-UniRule"/>
</dbReference>
<dbReference type="GO" id="GO:0006364">
    <property type="term" value="P:rRNA processing"/>
    <property type="evidence" value="ECO:0007669"/>
    <property type="project" value="UniProtKB-UniRule"/>
</dbReference>
<dbReference type="Gene3D" id="2.30.30.240">
    <property type="entry name" value="PRC-barrel domain"/>
    <property type="match status" value="1"/>
</dbReference>
<dbReference type="Gene3D" id="2.40.30.60">
    <property type="entry name" value="RimM"/>
    <property type="match status" value="1"/>
</dbReference>
<dbReference type="HAMAP" id="MF_00014">
    <property type="entry name" value="Ribosome_mat_RimM"/>
    <property type="match status" value="1"/>
</dbReference>
<dbReference type="InterPro" id="IPR011033">
    <property type="entry name" value="PRC_barrel-like_sf"/>
</dbReference>
<dbReference type="InterPro" id="IPR056792">
    <property type="entry name" value="PRC_RimM"/>
</dbReference>
<dbReference type="InterPro" id="IPR011961">
    <property type="entry name" value="RimM"/>
</dbReference>
<dbReference type="InterPro" id="IPR002676">
    <property type="entry name" value="RimM_N"/>
</dbReference>
<dbReference type="InterPro" id="IPR036976">
    <property type="entry name" value="RimM_N_sf"/>
</dbReference>
<dbReference type="InterPro" id="IPR009000">
    <property type="entry name" value="Transl_B-barrel_sf"/>
</dbReference>
<dbReference type="NCBIfam" id="TIGR02273">
    <property type="entry name" value="16S_RimM"/>
    <property type="match status" value="1"/>
</dbReference>
<dbReference type="PANTHER" id="PTHR33692">
    <property type="entry name" value="RIBOSOME MATURATION FACTOR RIMM"/>
    <property type="match status" value="1"/>
</dbReference>
<dbReference type="PANTHER" id="PTHR33692:SF1">
    <property type="entry name" value="RIBOSOME MATURATION FACTOR RIMM"/>
    <property type="match status" value="1"/>
</dbReference>
<dbReference type="Pfam" id="PF24986">
    <property type="entry name" value="PRC_RimM"/>
    <property type="match status" value="1"/>
</dbReference>
<dbReference type="Pfam" id="PF01782">
    <property type="entry name" value="RimM"/>
    <property type="match status" value="1"/>
</dbReference>
<dbReference type="SUPFAM" id="SSF50346">
    <property type="entry name" value="PRC-barrel domain"/>
    <property type="match status" value="1"/>
</dbReference>
<dbReference type="SUPFAM" id="SSF50447">
    <property type="entry name" value="Translation proteins"/>
    <property type="match status" value="1"/>
</dbReference>
<comment type="function">
    <text evidence="1">An accessory protein needed during the final step in the assembly of 30S ribosomal subunit, possibly for assembly of the head region. Essential for efficient processing of 16S rRNA. May be needed both before and after RbfA during the maturation of 16S rRNA. It has affinity for free ribosomal 30S subunits but not for 70S ribosomes.</text>
</comment>
<comment type="subunit">
    <text evidence="1">Binds ribosomal protein uS19.</text>
</comment>
<comment type="subcellular location">
    <subcellularLocation>
        <location evidence="1">Cytoplasm</location>
    </subcellularLocation>
</comment>
<comment type="domain">
    <text evidence="1">The PRC barrel domain binds ribosomal protein uS19.</text>
</comment>
<comment type="similarity">
    <text evidence="1">Belongs to the RimM family.</text>
</comment>
<name>RIMM_SYNJB</name>
<evidence type="ECO:0000255" key="1">
    <source>
        <dbReference type="HAMAP-Rule" id="MF_00014"/>
    </source>
</evidence>
<accession>Q2JPG6</accession>
<sequence>MMARDPDWLLVGQVVAAHGLRGWLRVRCWSDFPERFTEPGPRWLQRDTDPEPLLHPLIEGQFFPAKGLYLVRLEGIPNRTVAETWVGARLLVPASHRLPLQPEEYHYRDLIGLAVYHQGELLGQVSGILAAGQDVLEITTSDHRQVLIPFVKALVPVVDLEKGALHVQPPPGLVESFLG</sequence>
<feature type="chain" id="PRO_0000244178" description="Ribosome maturation factor RimM">
    <location>
        <begin position="1"/>
        <end position="179"/>
    </location>
</feature>
<feature type="domain" description="PRC barrel" evidence="1">
    <location>
        <begin position="102"/>
        <end position="173"/>
    </location>
</feature>
<proteinExistence type="inferred from homology"/>
<reference key="1">
    <citation type="journal article" date="2007" name="ISME J.">
        <title>Population level functional diversity in a microbial community revealed by comparative genomic and metagenomic analyses.</title>
        <authorList>
            <person name="Bhaya D."/>
            <person name="Grossman A.R."/>
            <person name="Steunou A.-S."/>
            <person name="Khuri N."/>
            <person name="Cohan F.M."/>
            <person name="Hamamura N."/>
            <person name="Melendrez M.C."/>
            <person name="Bateson M.M."/>
            <person name="Ward D.M."/>
            <person name="Heidelberg J.F."/>
        </authorList>
    </citation>
    <scope>NUCLEOTIDE SEQUENCE [LARGE SCALE GENOMIC DNA]</scope>
    <source>
        <strain>JA-2-3B'a(2-13)</strain>
    </source>
</reference>
<protein>
    <recommendedName>
        <fullName evidence="1">Ribosome maturation factor RimM</fullName>
    </recommendedName>
</protein>
<keyword id="KW-0143">Chaperone</keyword>
<keyword id="KW-0963">Cytoplasm</keyword>
<keyword id="KW-1185">Reference proteome</keyword>
<keyword id="KW-0690">Ribosome biogenesis</keyword>
<keyword id="KW-0698">rRNA processing</keyword>